<comment type="function">
    <text evidence="1">Multifunctional transcription factor that induces cell cycle arrest, DNA repair or apoptosis upon binding to its target DNA sequence. Acts as a tumor suppressor in many tumor types; induces growth arrest or apoptosis depending on the physiological circumstances and cell type. Negatively regulates cell division by controlling expression of a set of genes required for this process. One of the activated genes is an inhibitor of cyclin-dependent kinases. Apoptosis induction seems to be mediated either by stimulation of BAX and FAS antigen expression, or by repression of Bcl-2 expression (By similarity).</text>
</comment>
<comment type="cofactor">
    <cofactor evidence="1">
        <name>Zn(2+)</name>
        <dbReference type="ChEBI" id="CHEBI:29105"/>
    </cofactor>
    <text evidence="1">Binds 1 zinc ion per subunit.</text>
</comment>
<comment type="subunit">
    <text evidence="1">Binds DNA as a homotetramer.</text>
</comment>
<comment type="subcellular location">
    <subcellularLocation>
        <location evidence="1">Cytoplasm</location>
    </subcellularLocation>
    <subcellularLocation>
        <location evidence="1">Nucleus</location>
    </subcellularLocation>
</comment>
<comment type="tissue specificity">
    <text>Ubiquitous.</text>
</comment>
<comment type="domain">
    <text evidence="2">The N-terminal and C-terminal disordered regions undergo liquid-liquid phase separation (LLPS) following homotetramerization and activation. Post-translational modifications, such as phosphorylation or lactylation affect the ability to undergo LLPS.</text>
</comment>
<comment type="domain">
    <text evidence="2">The nuclear export signal acts as a transcriptional repression domain. The TADI and TADII motifs (residues 17 to 25 and 48 to 56) correspond both to 9aaTAD motifs which are transactivation domains present in a large number of yeast and animal transcription factors.</text>
</comment>
<comment type="similarity">
    <text evidence="4">Belongs to the p53 family.</text>
</comment>
<evidence type="ECO:0000250" key="1"/>
<evidence type="ECO:0000250" key="2">
    <source>
        <dbReference type="UniProtKB" id="P04637"/>
    </source>
</evidence>
<evidence type="ECO:0000256" key="3">
    <source>
        <dbReference type="SAM" id="MobiDB-lite"/>
    </source>
</evidence>
<evidence type="ECO:0000305" key="4"/>
<reference key="1">
    <citation type="journal article" date="1987" name="Oncogene">
        <title>Cloning and characterization of a cDNA from Xenopus laevis coding for a protein homologous to human and murine p53.</title>
        <authorList>
            <person name="Soussi T."/>
            <person name="de Fromentel C.C."/>
            <person name="Mechali M."/>
            <person name="May P."/>
            <person name="Kress M."/>
        </authorList>
    </citation>
    <scope>NUCLEOTIDE SEQUENCE [MRNA]</scope>
</reference>
<reference key="2">
    <citation type="journal article" date="1994" name="Oncogene">
        <title>Overexpression of wild-type p53 interferes with normal development in Xenopus laevis embryos.</title>
        <authorList>
            <person name="Hoever M."/>
            <person name="Clement J.H."/>
            <person name="Wedlich D."/>
            <person name="Montenarh M."/>
            <person name="Knoechel W."/>
        </authorList>
    </citation>
    <scope>NUCLEOTIDE SEQUENCE [MRNA]</scope>
</reference>
<proteinExistence type="evidence at transcript level"/>
<gene>
    <name type="primary">tp53</name>
</gene>
<accession>P07193</accession>
<name>P53_XENLA</name>
<keyword id="KW-0010">Activator</keyword>
<keyword id="KW-0053">Apoptosis</keyword>
<keyword id="KW-0131">Cell cycle</keyword>
<keyword id="KW-0963">Cytoplasm</keyword>
<keyword id="KW-0238">DNA-binding</keyword>
<keyword id="KW-0479">Metal-binding</keyword>
<keyword id="KW-0539">Nucleus</keyword>
<keyword id="KW-0597">Phosphoprotein</keyword>
<keyword id="KW-1185">Reference proteome</keyword>
<keyword id="KW-0804">Transcription</keyword>
<keyword id="KW-0805">Transcription regulation</keyword>
<keyword id="KW-0043">Tumor suppressor</keyword>
<keyword id="KW-0862">Zinc</keyword>
<organism>
    <name type="scientific">Xenopus laevis</name>
    <name type="common">African clawed frog</name>
    <dbReference type="NCBI Taxonomy" id="8355"/>
    <lineage>
        <taxon>Eukaryota</taxon>
        <taxon>Metazoa</taxon>
        <taxon>Chordata</taxon>
        <taxon>Craniata</taxon>
        <taxon>Vertebrata</taxon>
        <taxon>Euteleostomi</taxon>
        <taxon>Amphibia</taxon>
        <taxon>Batrachia</taxon>
        <taxon>Anura</taxon>
        <taxon>Pipoidea</taxon>
        <taxon>Pipidae</taxon>
        <taxon>Xenopodinae</taxon>
        <taxon>Xenopus</taxon>
        <taxon>Xenopus</taxon>
    </lineage>
</organism>
<dbReference type="EMBL" id="M36962">
    <property type="protein sequence ID" value="AAA49923.1"/>
    <property type="molecule type" value="mRNA"/>
</dbReference>
<dbReference type="EMBL" id="X05191">
    <property type="protein sequence ID" value="CAA28821.1"/>
    <property type="molecule type" value="mRNA"/>
</dbReference>
<dbReference type="EMBL" id="X77546">
    <property type="protein sequence ID" value="CAA54672.1"/>
    <property type="molecule type" value="mRNA"/>
</dbReference>
<dbReference type="EMBL" id="S68353">
    <property type="protein sequence ID" value="AAC60746.1"/>
    <property type="molecule type" value="mRNA"/>
</dbReference>
<dbReference type="PIR" id="A29376">
    <property type="entry name" value="A29376"/>
</dbReference>
<dbReference type="RefSeq" id="NP_001081567.1">
    <property type="nucleotide sequence ID" value="NM_001088098.1"/>
</dbReference>
<dbReference type="SMR" id="P07193"/>
<dbReference type="BioGRID" id="99262">
    <property type="interactions" value="1"/>
</dbReference>
<dbReference type="IntAct" id="P07193">
    <property type="interactions" value="1"/>
</dbReference>
<dbReference type="TCDB" id="1.C.110.1.2">
    <property type="family name" value="the pore-forming pnc-27 peptide of 32 aas from the p53 tumor suppressor protein (pnc-27) family"/>
</dbReference>
<dbReference type="iPTMnet" id="P07193"/>
<dbReference type="DNASU" id="397926"/>
<dbReference type="GeneID" id="397926"/>
<dbReference type="KEGG" id="xla:397926"/>
<dbReference type="AGR" id="Xenbase:XB-GENE-6252168"/>
<dbReference type="CTD" id="397926"/>
<dbReference type="Xenbase" id="XB-GENE-6252168">
    <property type="gene designation" value="tp53.L"/>
</dbReference>
<dbReference type="OrthoDB" id="5915660at2759"/>
<dbReference type="Proteomes" id="UP000186698">
    <property type="component" value="Chromosome 3L"/>
</dbReference>
<dbReference type="Bgee" id="397926">
    <property type="expression patterns" value="Expressed in blastula and 19 other cell types or tissues"/>
</dbReference>
<dbReference type="GO" id="GO:0005737">
    <property type="term" value="C:cytoplasm"/>
    <property type="evidence" value="ECO:0000250"/>
    <property type="project" value="UniProtKB"/>
</dbReference>
<dbReference type="GO" id="GO:0005739">
    <property type="term" value="C:mitochondrion"/>
    <property type="evidence" value="ECO:0000250"/>
    <property type="project" value="UniProtKB"/>
</dbReference>
<dbReference type="GO" id="GO:0005634">
    <property type="term" value="C:nucleus"/>
    <property type="evidence" value="ECO:0000250"/>
    <property type="project" value="UniProtKB"/>
</dbReference>
<dbReference type="GO" id="GO:0000981">
    <property type="term" value="F:DNA-binding transcription factor activity, RNA polymerase II-specific"/>
    <property type="evidence" value="ECO:0000318"/>
    <property type="project" value="GO_Central"/>
</dbReference>
<dbReference type="GO" id="GO:0046872">
    <property type="term" value="F:metal ion binding"/>
    <property type="evidence" value="ECO:0007669"/>
    <property type="project" value="UniProtKB-KW"/>
</dbReference>
<dbReference type="GO" id="GO:0140693">
    <property type="term" value="F:molecular condensate scaffold activity"/>
    <property type="evidence" value="ECO:0000250"/>
    <property type="project" value="UniProtKB"/>
</dbReference>
<dbReference type="GO" id="GO:1990841">
    <property type="term" value="F:promoter-specific chromatin binding"/>
    <property type="evidence" value="ECO:0000315"/>
    <property type="project" value="Xenbase"/>
</dbReference>
<dbReference type="GO" id="GO:0000978">
    <property type="term" value="F:RNA polymerase II cis-regulatory region sequence-specific DNA binding"/>
    <property type="evidence" value="ECO:0000318"/>
    <property type="project" value="GO_Central"/>
</dbReference>
<dbReference type="GO" id="GO:0006915">
    <property type="term" value="P:apoptotic process"/>
    <property type="evidence" value="ECO:0000315"/>
    <property type="project" value="Xenbase"/>
</dbReference>
<dbReference type="GO" id="GO:0008283">
    <property type="term" value="P:cell population proliferation"/>
    <property type="evidence" value="ECO:0000315"/>
    <property type="project" value="Xenbase"/>
</dbReference>
<dbReference type="GO" id="GO:0006974">
    <property type="term" value="P:DNA damage response"/>
    <property type="evidence" value="ECO:0000250"/>
    <property type="project" value="UniProtKB"/>
</dbReference>
<dbReference type="GO" id="GO:0045944">
    <property type="term" value="P:positive regulation of transcription by RNA polymerase II"/>
    <property type="evidence" value="ECO:0000315"/>
    <property type="project" value="Xenbase"/>
</dbReference>
<dbReference type="GO" id="GO:0051262">
    <property type="term" value="P:protein tetramerization"/>
    <property type="evidence" value="ECO:0007669"/>
    <property type="project" value="InterPro"/>
</dbReference>
<dbReference type="GO" id="GO:0006357">
    <property type="term" value="P:regulation of transcription by RNA polymerase II"/>
    <property type="evidence" value="ECO:0000318"/>
    <property type="project" value="GO_Central"/>
</dbReference>
<dbReference type="CDD" id="cd08367">
    <property type="entry name" value="P53"/>
    <property type="match status" value="1"/>
</dbReference>
<dbReference type="FunFam" id="2.60.40.720:FF:000003">
    <property type="entry name" value="Cellular tumor antigen p53"/>
    <property type="match status" value="1"/>
</dbReference>
<dbReference type="FunFam" id="4.10.170.10:FF:000005">
    <property type="entry name" value="Cellular tumor antigen p53"/>
    <property type="match status" value="1"/>
</dbReference>
<dbReference type="Gene3D" id="2.60.40.720">
    <property type="match status" value="1"/>
</dbReference>
<dbReference type="Gene3D" id="6.10.50.20">
    <property type="match status" value="1"/>
</dbReference>
<dbReference type="Gene3D" id="4.10.170.10">
    <property type="entry name" value="p53-like tetramerisation domain"/>
    <property type="match status" value="1"/>
</dbReference>
<dbReference type="InterPro" id="IPR008967">
    <property type="entry name" value="p53-like_TF_DNA-bd_sf"/>
</dbReference>
<dbReference type="InterPro" id="IPR012346">
    <property type="entry name" value="p53/RUNT-type_TF_DNA-bd_sf"/>
</dbReference>
<dbReference type="InterPro" id="IPR011615">
    <property type="entry name" value="p53_DNA-bd"/>
</dbReference>
<dbReference type="InterPro" id="IPR036674">
    <property type="entry name" value="p53_tetramer_sf"/>
</dbReference>
<dbReference type="InterPro" id="IPR010991">
    <property type="entry name" value="p53_tetrameristn"/>
</dbReference>
<dbReference type="InterPro" id="IPR013872">
    <property type="entry name" value="p53_transactivation_domain"/>
</dbReference>
<dbReference type="InterPro" id="IPR002117">
    <property type="entry name" value="p53_tumour_suppressor"/>
</dbReference>
<dbReference type="PANTHER" id="PTHR11447">
    <property type="entry name" value="CELLULAR TUMOR ANTIGEN P53"/>
    <property type="match status" value="1"/>
</dbReference>
<dbReference type="PANTHER" id="PTHR11447:SF6">
    <property type="entry name" value="CELLULAR TUMOR ANTIGEN P53"/>
    <property type="match status" value="1"/>
</dbReference>
<dbReference type="Pfam" id="PF00870">
    <property type="entry name" value="P53"/>
    <property type="match status" value="1"/>
</dbReference>
<dbReference type="Pfam" id="PF08563">
    <property type="entry name" value="P53_TAD"/>
    <property type="match status" value="1"/>
</dbReference>
<dbReference type="Pfam" id="PF07710">
    <property type="entry name" value="P53_tetramer"/>
    <property type="match status" value="1"/>
</dbReference>
<dbReference type="PRINTS" id="PR00386">
    <property type="entry name" value="P53SUPPRESSR"/>
</dbReference>
<dbReference type="SUPFAM" id="SSF47719">
    <property type="entry name" value="p53 tetramerization domain"/>
    <property type="match status" value="1"/>
</dbReference>
<dbReference type="SUPFAM" id="SSF49417">
    <property type="entry name" value="p53-like transcription factors"/>
    <property type="match status" value="1"/>
</dbReference>
<dbReference type="PROSITE" id="PS00348">
    <property type="entry name" value="P53"/>
    <property type="match status" value="1"/>
</dbReference>
<sequence>MEPSSETGMDPPLSQETFEDLWSLLPDPLQTVTCRLDNLSEFPDYPLAADMTVLQEGLMGNAVPTVTSCAVPSTDDYAGKYGLQLDFQQNGTAKSVTCTYSPELNKLFCQLAKTCPLLVRVESPPPRGSILRATAVYKKSEHVAEVVKRCPHHERSVEPGEDAAPPSHLMRVEGNLQAYYMEDVNSGRHSVCVPYEGPQVGTECTTVLYNYMCNSSCMGGMNRRPILTIITLETPQGLLLGRRCFEVRVCACPGRDRRTEEDNYTKKRGLKPSGKRELAHPPSSEPPLPKKRLVVVDDDEEIFTLRIKGRSRYEMIKKLNDALELQESLDQQKVTIKCRKCRDEIKPKKGKKLLVKDEQPDSE</sequence>
<feature type="chain" id="PRO_0000185726" description="Cellular tumor antigen p53">
    <location>
        <begin position="1"/>
        <end position="363"/>
    </location>
</feature>
<feature type="DNA-binding region" evidence="1">
    <location>
        <begin position="76"/>
        <end position="267"/>
    </location>
</feature>
<feature type="region of interest" description="Transcription activation (acidic)">
    <location>
        <begin position="1"/>
        <end position="29"/>
    </location>
</feature>
<feature type="region of interest" description="Interaction with DNA" evidence="1">
    <location>
        <begin position="248"/>
        <end position="255"/>
    </location>
</feature>
<feature type="region of interest" description="Disordered" evidence="3">
    <location>
        <begin position="257"/>
        <end position="290"/>
    </location>
</feature>
<feature type="region of interest" description="Oligomerization">
    <location>
        <begin position="300"/>
        <end position="331"/>
    </location>
</feature>
<feature type="region of interest" description="Basic (repression of DNA-binding)">
    <location>
        <begin position="344"/>
        <end position="356"/>
    </location>
</feature>
<feature type="short sequence motif" description="Bipartite nuclear localization signal" evidence="1">
    <location>
        <begin position="275"/>
        <end position="292"/>
    </location>
</feature>
<feature type="short sequence motif" description="Nuclear export signal" evidence="1">
    <location>
        <begin position="314"/>
        <end position="325"/>
    </location>
</feature>
<feature type="binding site" evidence="1">
    <location>
        <position position="150"/>
    </location>
    <ligand>
        <name>Zn(2+)</name>
        <dbReference type="ChEBI" id="CHEBI:29105"/>
    </ligand>
</feature>
<feature type="binding site" evidence="1">
    <location>
        <position position="153"/>
    </location>
    <ligand>
        <name>Zn(2+)</name>
        <dbReference type="ChEBI" id="CHEBI:29105"/>
    </ligand>
</feature>
<feature type="binding site" evidence="1">
    <location>
        <position position="213"/>
    </location>
    <ligand>
        <name>Zn(2+)</name>
        <dbReference type="ChEBI" id="CHEBI:29105"/>
    </ligand>
</feature>
<feature type="binding site" evidence="1">
    <location>
        <position position="217"/>
    </location>
    <ligand>
        <name>Zn(2+)</name>
        <dbReference type="ChEBI" id="CHEBI:29105"/>
    </ligand>
</feature>
<feature type="site" description="Interaction with DNA" evidence="1">
    <location>
        <position position="94"/>
    </location>
</feature>
<feature type="sequence conflict" description="In Ref. 2; CAA54672." evidence="4" ref="2">
    <original>T</original>
    <variation>S</variation>
    <location>
        <position position="52"/>
    </location>
</feature>
<feature type="sequence conflict" description="In Ref. 2; CAA54672." evidence="4" ref="2">
    <location>
        <position position="71"/>
    </location>
</feature>
<feature type="sequence conflict" description="In Ref. 2; CAA54672/AAC60746." evidence="4" ref="2">
    <location>
        <position position="296"/>
    </location>
</feature>
<protein>
    <recommendedName>
        <fullName>Cellular tumor antigen p53</fullName>
    </recommendedName>
    <alternativeName>
        <fullName>Tumor suppressor p53</fullName>
    </alternativeName>
</protein>